<keyword id="KW-0249">Electron transport</keyword>
<keyword id="KW-0472">Membrane</keyword>
<keyword id="KW-0496">Mitochondrion</keyword>
<keyword id="KW-0999">Mitochondrion inner membrane</keyword>
<keyword id="KW-0520">NAD</keyword>
<keyword id="KW-1185">Reference proteome</keyword>
<keyword id="KW-0679">Respiratory chain</keyword>
<keyword id="KW-1278">Translocase</keyword>
<keyword id="KW-0812">Transmembrane</keyword>
<keyword id="KW-1133">Transmembrane helix</keyword>
<keyword id="KW-0813">Transport</keyword>
<keyword id="KW-0830">Ubiquinone</keyword>
<evidence type="ECO:0000250" key="1">
    <source>
        <dbReference type="UniProtKB" id="P03915"/>
    </source>
</evidence>
<evidence type="ECO:0000250" key="2">
    <source>
        <dbReference type="UniProtKB" id="P03920"/>
    </source>
</evidence>
<evidence type="ECO:0000255" key="3"/>
<evidence type="ECO:0000305" key="4"/>
<evidence type="ECO:0000312" key="5">
    <source>
        <dbReference type="Proteomes" id="UP000000539"/>
    </source>
</evidence>
<geneLocation type="mitochondrion"/>
<comment type="function">
    <text evidence="1">Core subunit of the mitochondrial membrane respiratory chain NADH dehydrogenase (Complex I) which catalyzes electron transfer from NADH through the respiratory chain, using ubiquinone as an electron acceptor. Essential for the catalytic activity and assembly of complex I.</text>
</comment>
<comment type="catalytic activity">
    <reaction evidence="1">
        <text>a ubiquinone + NADH + 5 H(+)(in) = a ubiquinol + NAD(+) + 4 H(+)(out)</text>
        <dbReference type="Rhea" id="RHEA:29091"/>
        <dbReference type="Rhea" id="RHEA-COMP:9565"/>
        <dbReference type="Rhea" id="RHEA-COMP:9566"/>
        <dbReference type="ChEBI" id="CHEBI:15378"/>
        <dbReference type="ChEBI" id="CHEBI:16389"/>
        <dbReference type="ChEBI" id="CHEBI:17976"/>
        <dbReference type="ChEBI" id="CHEBI:57540"/>
        <dbReference type="ChEBI" id="CHEBI:57945"/>
        <dbReference type="EC" id="7.1.1.2"/>
    </reaction>
</comment>
<comment type="subunit">
    <text evidence="2">Core subunit of respiratory chain NADH dehydrogenase (Complex I) which is composed of 45 different subunits.</text>
</comment>
<comment type="subcellular location">
    <subcellularLocation>
        <location evidence="2">Mitochondrion inner membrane</location>
        <topology evidence="3">Multi-pass membrane protein</topology>
    </subcellularLocation>
</comment>
<comment type="similarity">
    <text evidence="4">Belongs to the complex I subunit 5 family.</text>
</comment>
<organism>
    <name type="scientific">Gallus gallus</name>
    <name type="common">Chicken</name>
    <dbReference type="NCBI Taxonomy" id="9031"/>
    <lineage>
        <taxon>Eukaryota</taxon>
        <taxon>Metazoa</taxon>
        <taxon>Chordata</taxon>
        <taxon>Craniata</taxon>
        <taxon>Vertebrata</taxon>
        <taxon>Euteleostomi</taxon>
        <taxon>Archelosauria</taxon>
        <taxon>Archosauria</taxon>
        <taxon>Dinosauria</taxon>
        <taxon>Saurischia</taxon>
        <taxon>Theropoda</taxon>
        <taxon>Coelurosauria</taxon>
        <taxon>Aves</taxon>
        <taxon>Neognathae</taxon>
        <taxon>Galloanserae</taxon>
        <taxon>Galliformes</taxon>
        <taxon>Phasianidae</taxon>
        <taxon>Phasianinae</taxon>
        <taxon>Gallus</taxon>
    </lineage>
</organism>
<sequence length="605" mass="66374">METPLLLNTLTTLTLLTLLTPIILPPLLNLKNSPMSITKTIKTAFLISLIPTTIFIHSGAESIATHWEWQFIPNFKIPISLKMDMYSMMFFPIALFVTWSILEFATWYMASEPFITKFFTYLLTFLIAMLTLTIANNMFLLFVGWEGVGIMSFLLIGWWQGRAEANTAALQAMIYNRIGDIGLILSMAWLASSLNTWEIQQITHPNQTPTLPLLGLILAATGKSAQFGLHPWLPAAMEGPTPVSALLHSSTMVVAGIFLLIRTHPFLSSNKTALTTCLCLGALSTLFAATCALTQNDIKKIIAFSTSSQLGLMMVTIGLDLPQLAFLHISTHAFFKAMLFLCSGLIIHSLNGEQDIRKMGCLQKTLPMTTSCLTIGNLALMGTPFLAGFYSKDLIIENLNTSYINTWALSLTLLATSFTATYSLRMTLLVQTGHTRTPSNHPINENTPPAILPIMRLALGSIMAGLLISSLILPPKTPPMTMPTITKTAAIIVTTLGIILALELSSLSYSLTPPKHNPLMNFSSSLGYFNPLTHRISPSILLHTGQKIASHLIDMAWYKKMGPEGLANLHLTMTKISTTLHTGLIKSYLGSFALTILTTILLIQK</sequence>
<gene>
    <name type="primary">MT-ND5</name>
    <name type="synonym">MTND5</name>
    <name type="synonym">NADH5</name>
    <name type="synonym">ND5</name>
</gene>
<name>NU5M_CHICK</name>
<proteinExistence type="inferred from homology"/>
<protein>
    <recommendedName>
        <fullName>NADH-ubiquinone oxidoreductase chain 5</fullName>
        <ecNumber evidence="1">7.1.1.2</ecNumber>
    </recommendedName>
    <alternativeName>
        <fullName>NADH dehydrogenase subunit 5</fullName>
    </alternativeName>
</protein>
<accession>P18940</accession>
<feature type="chain" id="PRO_0000118078" description="NADH-ubiquinone oxidoreductase chain 5">
    <location>
        <begin position="1"/>
        <end position="605"/>
    </location>
</feature>
<feature type="transmembrane region" description="Helical" evidence="3">
    <location>
        <begin position="10"/>
        <end position="30"/>
    </location>
</feature>
<feature type="transmembrane region" description="Helical" evidence="3">
    <location>
        <begin position="44"/>
        <end position="64"/>
    </location>
</feature>
<feature type="transmembrane region" description="Helical" evidence="3">
    <location>
        <begin position="88"/>
        <end position="108"/>
    </location>
</feature>
<feature type="transmembrane region" description="Helical" evidence="3">
    <location>
        <begin position="114"/>
        <end position="134"/>
    </location>
</feature>
<feature type="transmembrane region" description="Helical" evidence="3">
    <location>
        <begin position="139"/>
        <end position="159"/>
    </location>
</feature>
<feature type="transmembrane region" description="Helical" evidence="3">
    <location>
        <begin position="178"/>
        <end position="198"/>
    </location>
</feature>
<feature type="transmembrane region" description="Helical" evidence="3">
    <location>
        <begin position="213"/>
        <end position="233"/>
    </location>
</feature>
<feature type="transmembrane region" description="Helical" evidence="3">
    <location>
        <begin position="241"/>
        <end position="261"/>
    </location>
</feature>
<feature type="transmembrane region" description="Helical" evidence="3">
    <location>
        <begin position="273"/>
        <end position="293"/>
    </location>
</feature>
<feature type="transmembrane region" description="Helical" evidence="3">
    <location>
        <begin position="301"/>
        <end position="319"/>
    </location>
</feature>
<feature type="transmembrane region" description="Helical" evidence="3">
    <location>
        <begin position="332"/>
        <end position="352"/>
    </location>
</feature>
<feature type="transmembrane region" description="Helical" evidence="3">
    <location>
        <begin position="370"/>
        <end position="390"/>
    </location>
</feature>
<feature type="transmembrane region" description="Helical" evidence="3">
    <location>
        <begin position="404"/>
        <end position="424"/>
    </location>
</feature>
<feature type="transmembrane region" description="Helical" evidence="3">
    <location>
        <begin position="448"/>
        <end position="468"/>
    </location>
</feature>
<feature type="transmembrane region" description="Helical" evidence="3">
    <location>
        <begin position="489"/>
        <end position="509"/>
    </location>
</feature>
<feature type="transmembrane region" description="Helical" evidence="3">
    <location>
        <begin position="583"/>
        <end position="603"/>
    </location>
</feature>
<reference key="1">
    <citation type="journal article" date="1990" name="J. Mol. Biol.">
        <title>Sequence and gene organization of the chicken mitochondrial genome. A novel gene order in higher vertebrates.</title>
        <authorList>
            <person name="Desjardins P."/>
            <person name="Morais R."/>
        </authorList>
    </citation>
    <scope>NUCLEOTIDE SEQUENCE [GENOMIC DNA]</scope>
    <source>
        <strain evidence="5">Red jungle fowl</strain>
    </source>
</reference>
<dbReference type="EC" id="7.1.1.2" evidence="1"/>
<dbReference type="EMBL" id="X52392">
    <property type="protein sequence ID" value="CAA36635.1"/>
    <property type="molecule type" value="Genomic_DNA"/>
</dbReference>
<dbReference type="PIR" id="S10197">
    <property type="entry name" value="S10197"/>
</dbReference>
<dbReference type="RefSeq" id="NP_006925.1">
    <property type="nucleotide sequence ID" value="NC_001323.1"/>
</dbReference>
<dbReference type="SMR" id="P18940"/>
<dbReference type="FunCoup" id="P18940">
    <property type="interactions" value="14"/>
</dbReference>
<dbReference type="STRING" id="9031.ENSGALP00000050219"/>
<dbReference type="GlyGen" id="P18940">
    <property type="glycosylation" value="1 site"/>
</dbReference>
<dbReference type="PaxDb" id="9031-ENSGALP00000034622"/>
<dbReference type="VEuPathDB" id="HostDB:geneid_63549495"/>
<dbReference type="eggNOG" id="KOG4668">
    <property type="taxonomic scope" value="Eukaryota"/>
</dbReference>
<dbReference type="HOGENOM" id="CLU_007100_6_0_1"/>
<dbReference type="InParanoid" id="P18940"/>
<dbReference type="PhylomeDB" id="P18940"/>
<dbReference type="TreeFam" id="TF342974"/>
<dbReference type="Reactome" id="R-GGA-611105">
    <property type="pathway name" value="Respiratory electron transport"/>
</dbReference>
<dbReference type="Reactome" id="R-GGA-6799198">
    <property type="pathway name" value="Complex I biogenesis"/>
</dbReference>
<dbReference type="PRO" id="PR:P18940"/>
<dbReference type="Proteomes" id="UP000000539">
    <property type="component" value="Mitochondrion MT"/>
</dbReference>
<dbReference type="Bgee" id="ENSGALG00000029500">
    <property type="expression patterns" value="Expressed in cerebellum and 12 other cell types or tissues"/>
</dbReference>
<dbReference type="GO" id="GO:0005743">
    <property type="term" value="C:mitochondrial inner membrane"/>
    <property type="evidence" value="ECO:0000250"/>
    <property type="project" value="UniProtKB"/>
</dbReference>
<dbReference type="GO" id="GO:0045271">
    <property type="term" value="C:respiratory chain complex I"/>
    <property type="evidence" value="ECO:0000318"/>
    <property type="project" value="GO_Central"/>
</dbReference>
<dbReference type="GO" id="GO:0008137">
    <property type="term" value="F:NADH dehydrogenase (ubiquinone) activity"/>
    <property type="evidence" value="ECO:0000250"/>
    <property type="project" value="UniProtKB"/>
</dbReference>
<dbReference type="GO" id="GO:0015990">
    <property type="term" value="P:electron transport coupled proton transport"/>
    <property type="evidence" value="ECO:0000318"/>
    <property type="project" value="GO_Central"/>
</dbReference>
<dbReference type="GO" id="GO:0006120">
    <property type="term" value="P:mitochondrial electron transport, NADH to ubiquinone"/>
    <property type="evidence" value="ECO:0000250"/>
    <property type="project" value="UniProtKB"/>
</dbReference>
<dbReference type="GO" id="GO:0032981">
    <property type="term" value="P:mitochondrial respiratory chain complex I assembly"/>
    <property type="evidence" value="ECO:0000250"/>
    <property type="project" value="UniProtKB"/>
</dbReference>
<dbReference type="InterPro" id="IPR010934">
    <property type="entry name" value="NADH_DH_su5_C"/>
</dbReference>
<dbReference type="InterPro" id="IPR018393">
    <property type="entry name" value="NADHpl_OxRdtase_5_subgr"/>
</dbReference>
<dbReference type="InterPro" id="IPR001750">
    <property type="entry name" value="ND/Mrp_TM"/>
</dbReference>
<dbReference type="InterPro" id="IPR003945">
    <property type="entry name" value="NU5C-like"/>
</dbReference>
<dbReference type="InterPro" id="IPR001516">
    <property type="entry name" value="Proton_antipo_N"/>
</dbReference>
<dbReference type="NCBIfam" id="TIGR01974">
    <property type="entry name" value="NDH_I_L"/>
    <property type="match status" value="1"/>
</dbReference>
<dbReference type="PANTHER" id="PTHR42829">
    <property type="entry name" value="NADH-UBIQUINONE OXIDOREDUCTASE CHAIN 5"/>
    <property type="match status" value="1"/>
</dbReference>
<dbReference type="PANTHER" id="PTHR42829:SF2">
    <property type="entry name" value="NADH-UBIQUINONE OXIDOREDUCTASE CHAIN 5"/>
    <property type="match status" value="1"/>
</dbReference>
<dbReference type="Pfam" id="PF06455">
    <property type="entry name" value="NADH5_C"/>
    <property type="match status" value="1"/>
</dbReference>
<dbReference type="Pfam" id="PF00361">
    <property type="entry name" value="Proton_antipo_M"/>
    <property type="match status" value="1"/>
</dbReference>
<dbReference type="Pfam" id="PF00662">
    <property type="entry name" value="Proton_antipo_N"/>
    <property type="match status" value="1"/>
</dbReference>
<dbReference type="PRINTS" id="PR01434">
    <property type="entry name" value="NADHDHGNASE5"/>
</dbReference>